<keyword id="KW-0067">ATP-binding</keyword>
<keyword id="KW-0963">Cytoplasm</keyword>
<keyword id="KW-0227">DNA damage</keyword>
<keyword id="KW-0233">DNA recombination</keyword>
<keyword id="KW-0234">DNA repair</keyword>
<keyword id="KW-0238">DNA-binding</keyword>
<keyword id="KW-0378">Hydrolase</keyword>
<keyword id="KW-0547">Nucleotide-binding</keyword>
<protein>
    <recommendedName>
        <fullName evidence="1">Holliday junction branch migration complex subunit RuvB</fullName>
        <ecNumber evidence="1">3.6.4.-</ecNumber>
    </recommendedName>
</protein>
<evidence type="ECO:0000255" key="1">
    <source>
        <dbReference type="HAMAP-Rule" id="MF_00016"/>
    </source>
</evidence>
<sequence length="345" mass="38049">MSEPDRIVSAVQRGEDIDTTMRPQSLDEFVGQKTARANLKVFIEAARSRGEALDHVLFVGPPGLGKTTLAQIMARELGVNFRSTSGPVIAKAGDLAALLTNLEERDVLFIDEIHRLNPAVEEILYPAMEDYQLDLIIGEGPAARSVKIDLAKFTLVAATTRLGLLTTPLRDRFGIPIRLEFYTVDELQAIVTRGARIMGMPLAEDGAEEIARRARGTPRIAGRLLRRVRDFAYVAGAENVTRQIADAALSRLEVDALGLDQLDRRYLHMIVENFGGGPVGIETIAAALSEPRDAIEDIIEPYLIQQGFIQRTPRGRVLAAKAWRHLGLNPPKELAQSQINLFEEE</sequence>
<proteinExistence type="inferred from homology"/>
<reference key="1">
    <citation type="submission" date="2006-06" db="EMBL/GenBank/DDBJ databases">
        <title>Complete sequence of chromosome of Mesorhizobium sp. BNC1.</title>
        <authorList>
            <consortium name="US DOE Joint Genome Institute"/>
            <person name="Copeland A."/>
            <person name="Lucas S."/>
            <person name="Lapidus A."/>
            <person name="Barry K."/>
            <person name="Detter J.C."/>
            <person name="Glavina del Rio T."/>
            <person name="Hammon N."/>
            <person name="Israni S."/>
            <person name="Dalin E."/>
            <person name="Tice H."/>
            <person name="Pitluck S."/>
            <person name="Chertkov O."/>
            <person name="Brettin T."/>
            <person name="Bruce D."/>
            <person name="Han C."/>
            <person name="Tapia R."/>
            <person name="Gilna P."/>
            <person name="Schmutz J."/>
            <person name="Larimer F."/>
            <person name="Land M."/>
            <person name="Hauser L."/>
            <person name="Kyrpides N."/>
            <person name="Mikhailova N."/>
            <person name="Richardson P."/>
        </authorList>
    </citation>
    <scope>NUCLEOTIDE SEQUENCE [LARGE SCALE GENOMIC DNA]</scope>
    <source>
        <strain>BNC1</strain>
    </source>
</reference>
<comment type="function">
    <text evidence="1">The RuvA-RuvB-RuvC complex processes Holliday junction (HJ) DNA during genetic recombination and DNA repair, while the RuvA-RuvB complex plays an important role in the rescue of blocked DNA replication forks via replication fork reversal (RFR). RuvA specifically binds to HJ cruciform DNA, conferring on it an open structure. The RuvB hexamer acts as an ATP-dependent pump, pulling dsDNA into and through the RuvAB complex. RuvB forms 2 homohexamers on either side of HJ DNA bound by 1 or 2 RuvA tetramers; 4 subunits per hexamer contact DNA at a time. Coordinated motions by a converter formed by DNA-disengaged RuvB subunits stimulates ATP hydrolysis and nucleotide exchange. Immobilization of the converter enables RuvB to convert the ATP-contained energy into a lever motion, pulling 2 nucleotides of DNA out of the RuvA tetramer per ATP hydrolyzed, thus driving DNA branch migration. The RuvB motors rotate together with the DNA substrate, which together with the progressing nucleotide cycle form the mechanistic basis for DNA recombination by continuous HJ branch migration. Branch migration allows RuvC to scan DNA until it finds its consensus sequence, where it cleaves and resolves cruciform DNA.</text>
</comment>
<comment type="catalytic activity">
    <reaction evidence="1">
        <text>ATP + H2O = ADP + phosphate + H(+)</text>
        <dbReference type="Rhea" id="RHEA:13065"/>
        <dbReference type="ChEBI" id="CHEBI:15377"/>
        <dbReference type="ChEBI" id="CHEBI:15378"/>
        <dbReference type="ChEBI" id="CHEBI:30616"/>
        <dbReference type="ChEBI" id="CHEBI:43474"/>
        <dbReference type="ChEBI" id="CHEBI:456216"/>
    </reaction>
</comment>
<comment type="subunit">
    <text evidence="1">Homohexamer. Forms an RuvA(8)-RuvB(12)-Holliday junction (HJ) complex. HJ DNA is sandwiched between 2 RuvA tetramers; dsDNA enters through RuvA and exits via RuvB. An RuvB hexamer assembles on each DNA strand where it exits the tetramer. Each RuvB hexamer is contacted by two RuvA subunits (via domain III) on 2 adjacent RuvB subunits; this complex drives branch migration. In the full resolvosome a probable DNA-RuvA(4)-RuvB(12)-RuvC(2) complex forms which resolves the HJ.</text>
</comment>
<comment type="subcellular location">
    <subcellularLocation>
        <location evidence="1">Cytoplasm</location>
    </subcellularLocation>
</comment>
<comment type="domain">
    <text evidence="1">Has 3 domains, the large (RuvB-L) and small ATPase (RuvB-S) domains and the C-terminal head (RuvB-H) domain. The head domain binds DNA, while the ATPase domains jointly bind ATP, ADP or are empty depending on the state of the subunit in the translocation cycle. During a single DNA translocation step the structure of each domain remains the same, but their relative positions change.</text>
</comment>
<comment type="similarity">
    <text evidence="1">Belongs to the RuvB family.</text>
</comment>
<dbReference type="EC" id="3.6.4.-" evidence="1"/>
<dbReference type="EMBL" id="CP000390">
    <property type="protein sequence ID" value="ABG64548.1"/>
    <property type="molecule type" value="Genomic_DNA"/>
</dbReference>
<dbReference type="SMR" id="Q11DH7"/>
<dbReference type="STRING" id="266779.Meso_3176"/>
<dbReference type="KEGG" id="mes:Meso_3176"/>
<dbReference type="eggNOG" id="COG2255">
    <property type="taxonomic scope" value="Bacteria"/>
</dbReference>
<dbReference type="HOGENOM" id="CLU_055599_1_0_5"/>
<dbReference type="OrthoDB" id="9804478at2"/>
<dbReference type="GO" id="GO:0005737">
    <property type="term" value="C:cytoplasm"/>
    <property type="evidence" value="ECO:0007669"/>
    <property type="project" value="UniProtKB-SubCell"/>
</dbReference>
<dbReference type="GO" id="GO:0048476">
    <property type="term" value="C:Holliday junction resolvase complex"/>
    <property type="evidence" value="ECO:0007669"/>
    <property type="project" value="UniProtKB-UniRule"/>
</dbReference>
<dbReference type="GO" id="GO:0005524">
    <property type="term" value="F:ATP binding"/>
    <property type="evidence" value="ECO:0007669"/>
    <property type="project" value="UniProtKB-UniRule"/>
</dbReference>
<dbReference type="GO" id="GO:0016887">
    <property type="term" value="F:ATP hydrolysis activity"/>
    <property type="evidence" value="ECO:0007669"/>
    <property type="project" value="InterPro"/>
</dbReference>
<dbReference type="GO" id="GO:0000400">
    <property type="term" value="F:four-way junction DNA binding"/>
    <property type="evidence" value="ECO:0007669"/>
    <property type="project" value="UniProtKB-UniRule"/>
</dbReference>
<dbReference type="GO" id="GO:0009378">
    <property type="term" value="F:four-way junction helicase activity"/>
    <property type="evidence" value="ECO:0007669"/>
    <property type="project" value="InterPro"/>
</dbReference>
<dbReference type="GO" id="GO:0006310">
    <property type="term" value="P:DNA recombination"/>
    <property type="evidence" value="ECO:0007669"/>
    <property type="project" value="UniProtKB-UniRule"/>
</dbReference>
<dbReference type="GO" id="GO:0006281">
    <property type="term" value="P:DNA repair"/>
    <property type="evidence" value="ECO:0007669"/>
    <property type="project" value="UniProtKB-UniRule"/>
</dbReference>
<dbReference type="CDD" id="cd00009">
    <property type="entry name" value="AAA"/>
    <property type="match status" value="1"/>
</dbReference>
<dbReference type="Gene3D" id="1.10.8.60">
    <property type="match status" value="1"/>
</dbReference>
<dbReference type="Gene3D" id="3.40.50.300">
    <property type="entry name" value="P-loop containing nucleotide triphosphate hydrolases"/>
    <property type="match status" value="1"/>
</dbReference>
<dbReference type="Gene3D" id="1.10.10.10">
    <property type="entry name" value="Winged helix-like DNA-binding domain superfamily/Winged helix DNA-binding domain"/>
    <property type="match status" value="1"/>
</dbReference>
<dbReference type="HAMAP" id="MF_00016">
    <property type="entry name" value="DNA_HJ_migration_RuvB"/>
    <property type="match status" value="1"/>
</dbReference>
<dbReference type="InterPro" id="IPR003593">
    <property type="entry name" value="AAA+_ATPase"/>
</dbReference>
<dbReference type="InterPro" id="IPR041445">
    <property type="entry name" value="AAA_lid_4"/>
</dbReference>
<dbReference type="InterPro" id="IPR004605">
    <property type="entry name" value="DNA_helicase_Holl-junc_RuvB"/>
</dbReference>
<dbReference type="InterPro" id="IPR027417">
    <property type="entry name" value="P-loop_NTPase"/>
</dbReference>
<dbReference type="InterPro" id="IPR008824">
    <property type="entry name" value="RuvB-like_N"/>
</dbReference>
<dbReference type="InterPro" id="IPR008823">
    <property type="entry name" value="RuvB_C"/>
</dbReference>
<dbReference type="InterPro" id="IPR036388">
    <property type="entry name" value="WH-like_DNA-bd_sf"/>
</dbReference>
<dbReference type="InterPro" id="IPR036390">
    <property type="entry name" value="WH_DNA-bd_sf"/>
</dbReference>
<dbReference type="NCBIfam" id="NF000868">
    <property type="entry name" value="PRK00080.1"/>
    <property type="match status" value="1"/>
</dbReference>
<dbReference type="NCBIfam" id="TIGR00635">
    <property type="entry name" value="ruvB"/>
    <property type="match status" value="1"/>
</dbReference>
<dbReference type="PANTHER" id="PTHR42848">
    <property type="match status" value="1"/>
</dbReference>
<dbReference type="PANTHER" id="PTHR42848:SF1">
    <property type="entry name" value="HOLLIDAY JUNCTION BRANCH MIGRATION COMPLEX SUBUNIT RUVB"/>
    <property type="match status" value="1"/>
</dbReference>
<dbReference type="Pfam" id="PF17864">
    <property type="entry name" value="AAA_lid_4"/>
    <property type="match status" value="1"/>
</dbReference>
<dbReference type="Pfam" id="PF05491">
    <property type="entry name" value="RuvB_C"/>
    <property type="match status" value="1"/>
</dbReference>
<dbReference type="Pfam" id="PF05496">
    <property type="entry name" value="RuvB_N"/>
    <property type="match status" value="1"/>
</dbReference>
<dbReference type="SMART" id="SM00382">
    <property type="entry name" value="AAA"/>
    <property type="match status" value="1"/>
</dbReference>
<dbReference type="SUPFAM" id="SSF52540">
    <property type="entry name" value="P-loop containing nucleoside triphosphate hydrolases"/>
    <property type="match status" value="1"/>
</dbReference>
<dbReference type="SUPFAM" id="SSF46785">
    <property type="entry name" value="Winged helix' DNA-binding domain"/>
    <property type="match status" value="1"/>
</dbReference>
<accession>Q11DH7</accession>
<organism>
    <name type="scientific">Chelativorans sp. (strain BNC1)</name>
    <dbReference type="NCBI Taxonomy" id="266779"/>
    <lineage>
        <taxon>Bacteria</taxon>
        <taxon>Pseudomonadati</taxon>
        <taxon>Pseudomonadota</taxon>
        <taxon>Alphaproteobacteria</taxon>
        <taxon>Hyphomicrobiales</taxon>
        <taxon>Phyllobacteriaceae</taxon>
        <taxon>Chelativorans</taxon>
    </lineage>
</organism>
<name>RUVB_CHESB</name>
<feature type="chain" id="PRO_1000001426" description="Holliday junction branch migration complex subunit RuvB">
    <location>
        <begin position="1"/>
        <end position="345"/>
    </location>
</feature>
<feature type="region of interest" description="Large ATPase domain (RuvB-L)" evidence="1">
    <location>
        <begin position="4"/>
        <end position="182"/>
    </location>
</feature>
<feature type="region of interest" description="Small ATPAse domain (RuvB-S)" evidence="1">
    <location>
        <begin position="183"/>
        <end position="253"/>
    </location>
</feature>
<feature type="region of interest" description="Head domain (RuvB-H)" evidence="1">
    <location>
        <begin position="256"/>
        <end position="345"/>
    </location>
</feature>
<feature type="binding site" evidence="1">
    <location>
        <position position="22"/>
    </location>
    <ligand>
        <name>ATP</name>
        <dbReference type="ChEBI" id="CHEBI:30616"/>
    </ligand>
</feature>
<feature type="binding site" evidence="1">
    <location>
        <position position="63"/>
    </location>
    <ligand>
        <name>ATP</name>
        <dbReference type="ChEBI" id="CHEBI:30616"/>
    </ligand>
</feature>
<feature type="binding site" evidence="1">
    <location>
        <position position="66"/>
    </location>
    <ligand>
        <name>ATP</name>
        <dbReference type="ChEBI" id="CHEBI:30616"/>
    </ligand>
</feature>
<feature type="binding site" evidence="1">
    <location>
        <position position="67"/>
    </location>
    <ligand>
        <name>ATP</name>
        <dbReference type="ChEBI" id="CHEBI:30616"/>
    </ligand>
</feature>
<feature type="binding site" evidence="1">
    <location>
        <position position="67"/>
    </location>
    <ligand>
        <name>Mg(2+)</name>
        <dbReference type="ChEBI" id="CHEBI:18420"/>
    </ligand>
</feature>
<feature type="binding site" evidence="1">
    <location>
        <position position="68"/>
    </location>
    <ligand>
        <name>ATP</name>
        <dbReference type="ChEBI" id="CHEBI:30616"/>
    </ligand>
</feature>
<feature type="binding site" evidence="1">
    <location>
        <begin position="129"/>
        <end position="131"/>
    </location>
    <ligand>
        <name>ATP</name>
        <dbReference type="ChEBI" id="CHEBI:30616"/>
    </ligand>
</feature>
<feature type="binding site" evidence="1">
    <location>
        <position position="172"/>
    </location>
    <ligand>
        <name>ATP</name>
        <dbReference type="ChEBI" id="CHEBI:30616"/>
    </ligand>
</feature>
<feature type="binding site" evidence="1">
    <location>
        <position position="182"/>
    </location>
    <ligand>
        <name>ATP</name>
        <dbReference type="ChEBI" id="CHEBI:30616"/>
    </ligand>
</feature>
<feature type="binding site" evidence="1">
    <location>
        <position position="219"/>
    </location>
    <ligand>
        <name>ATP</name>
        <dbReference type="ChEBI" id="CHEBI:30616"/>
    </ligand>
</feature>
<feature type="binding site" evidence="1">
    <location>
        <position position="292"/>
    </location>
    <ligand>
        <name>DNA</name>
        <dbReference type="ChEBI" id="CHEBI:16991"/>
    </ligand>
</feature>
<feature type="binding site" evidence="1">
    <location>
        <position position="311"/>
    </location>
    <ligand>
        <name>DNA</name>
        <dbReference type="ChEBI" id="CHEBI:16991"/>
    </ligand>
</feature>
<feature type="binding site" evidence="1">
    <location>
        <position position="316"/>
    </location>
    <ligand>
        <name>DNA</name>
        <dbReference type="ChEBI" id="CHEBI:16991"/>
    </ligand>
</feature>
<gene>
    <name evidence="1" type="primary">ruvB</name>
    <name type="ordered locus">Meso_3176</name>
</gene>